<dbReference type="EC" id="4.2.3.4" evidence="1"/>
<dbReference type="EMBL" id="AE016826">
    <property type="protein sequence ID" value="AAO27186.1"/>
    <property type="molecule type" value="Genomic_DNA"/>
</dbReference>
<dbReference type="SMR" id="P59487"/>
<dbReference type="STRING" id="224915.bbp_480"/>
<dbReference type="KEGG" id="bab:bbp_480"/>
<dbReference type="eggNOG" id="COG0337">
    <property type="taxonomic scope" value="Bacteria"/>
</dbReference>
<dbReference type="HOGENOM" id="CLU_001201_0_2_6"/>
<dbReference type="OrthoDB" id="9806583at2"/>
<dbReference type="UniPathway" id="UPA00053">
    <property type="reaction ID" value="UER00085"/>
</dbReference>
<dbReference type="Proteomes" id="UP000000601">
    <property type="component" value="Chromosome"/>
</dbReference>
<dbReference type="GO" id="GO:0005737">
    <property type="term" value="C:cytoplasm"/>
    <property type="evidence" value="ECO:0007669"/>
    <property type="project" value="UniProtKB-SubCell"/>
</dbReference>
<dbReference type="GO" id="GO:0003856">
    <property type="term" value="F:3-dehydroquinate synthase activity"/>
    <property type="evidence" value="ECO:0007669"/>
    <property type="project" value="UniProtKB-UniRule"/>
</dbReference>
<dbReference type="GO" id="GO:0046872">
    <property type="term" value="F:metal ion binding"/>
    <property type="evidence" value="ECO:0007669"/>
    <property type="project" value="UniProtKB-KW"/>
</dbReference>
<dbReference type="GO" id="GO:0000166">
    <property type="term" value="F:nucleotide binding"/>
    <property type="evidence" value="ECO:0007669"/>
    <property type="project" value="UniProtKB-KW"/>
</dbReference>
<dbReference type="GO" id="GO:0008652">
    <property type="term" value="P:amino acid biosynthetic process"/>
    <property type="evidence" value="ECO:0007669"/>
    <property type="project" value="UniProtKB-KW"/>
</dbReference>
<dbReference type="GO" id="GO:0009073">
    <property type="term" value="P:aromatic amino acid family biosynthetic process"/>
    <property type="evidence" value="ECO:0007669"/>
    <property type="project" value="UniProtKB-KW"/>
</dbReference>
<dbReference type="GO" id="GO:0009423">
    <property type="term" value="P:chorismate biosynthetic process"/>
    <property type="evidence" value="ECO:0007669"/>
    <property type="project" value="UniProtKB-UniRule"/>
</dbReference>
<dbReference type="CDD" id="cd08195">
    <property type="entry name" value="DHQS"/>
    <property type="match status" value="1"/>
</dbReference>
<dbReference type="FunFam" id="3.40.50.1970:FF:000001">
    <property type="entry name" value="3-dehydroquinate synthase"/>
    <property type="match status" value="1"/>
</dbReference>
<dbReference type="Gene3D" id="3.40.50.1970">
    <property type="match status" value="1"/>
</dbReference>
<dbReference type="Gene3D" id="1.20.1090.10">
    <property type="entry name" value="Dehydroquinate synthase-like - alpha domain"/>
    <property type="match status" value="1"/>
</dbReference>
<dbReference type="HAMAP" id="MF_00110">
    <property type="entry name" value="DHQ_synthase"/>
    <property type="match status" value="1"/>
</dbReference>
<dbReference type="InterPro" id="IPR050071">
    <property type="entry name" value="Dehydroquinate_synthase"/>
</dbReference>
<dbReference type="InterPro" id="IPR016037">
    <property type="entry name" value="DHQ_synth_AroB"/>
</dbReference>
<dbReference type="InterPro" id="IPR030963">
    <property type="entry name" value="DHQ_synth_fam"/>
</dbReference>
<dbReference type="InterPro" id="IPR030960">
    <property type="entry name" value="DHQS/DOIS_N"/>
</dbReference>
<dbReference type="InterPro" id="IPR056179">
    <property type="entry name" value="DHQS_C"/>
</dbReference>
<dbReference type="NCBIfam" id="TIGR01357">
    <property type="entry name" value="aroB"/>
    <property type="match status" value="1"/>
</dbReference>
<dbReference type="PANTHER" id="PTHR43622">
    <property type="entry name" value="3-DEHYDROQUINATE SYNTHASE"/>
    <property type="match status" value="1"/>
</dbReference>
<dbReference type="PANTHER" id="PTHR43622:SF7">
    <property type="entry name" value="3-DEHYDROQUINATE SYNTHASE, CHLOROPLASTIC"/>
    <property type="match status" value="1"/>
</dbReference>
<dbReference type="Pfam" id="PF01761">
    <property type="entry name" value="DHQ_synthase"/>
    <property type="match status" value="1"/>
</dbReference>
<dbReference type="Pfam" id="PF24621">
    <property type="entry name" value="DHQS_C"/>
    <property type="match status" value="1"/>
</dbReference>
<dbReference type="PIRSF" id="PIRSF001455">
    <property type="entry name" value="DHQ_synth"/>
    <property type="match status" value="1"/>
</dbReference>
<dbReference type="SUPFAM" id="SSF56796">
    <property type="entry name" value="Dehydroquinate synthase-like"/>
    <property type="match status" value="1"/>
</dbReference>
<protein>
    <recommendedName>
        <fullName evidence="1">3-dehydroquinate synthase</fullName>
        <shortName evidence="1">DHQS</shortName>
        <ecNumber evidence="1">4.2.3.4</ecNumber>
    </recommendedName>
</protein>
<feature type="chain" id="PRO_0000140719" description="3-dehydroquinate synthase">
    <location>
        <begin position="1"/>
        <end position="355"/>
    </location>
</feature>
<feature type="binding site" evidence="1">
    <location>
        <begin position="67"/>
        <end position="72"/>
    </location>
    <ligand>
        <name>NAD(+)</name>
        <dbReference type="ChEBI" id="CHEBI:57540"/>
    </ligand>
</feature>
<feature type="binding site" evidence="1">
    <location>
        <begin position="101"/>
        <end position="105"/>
    </location>
    <ligand>
        <name>NAD(+)</name>
        <dbReference type="ChEBI" id="CHEBI:57540"/>
    </ligand>
</feature>
<feature type="binding site" evidence="1">
    <location>
        <begin position="125"/>
        <end position="126"/>
    </location>
    <ligand>
        <name>NAD(+)</name>
        <dbReference type="ChEBI" id="CHEBI:57540"/>
    </ligand>
</feature>
<feature type="binding site" evidence="1">
    <location>
        <position position="138"/>
    </location>
    <ligand>
        <name>NAD(+)</name>
        <dbReference type="ChEBI" id="CHEBI:57540"/>
    </ligand>
</feature>
<feature type="binding site" evidence="1">
    <location>
        <position position="147"/>
    </location>
    <ligand>
        <name>NAD(+)</name>
        <dbReference type="ChEBI" id="CHEBI:57540"/>
    </ligand>
</feature>
<feature type="binding site" evidence="1">
    <location>
        <begin position="165"/>
        <end position="168"/>
    </location>
    <ligand>
        <name>NAD(+)</name>
        <dbReference type="ChEBI" id="CHEBI:57540"/>
    </ligand>
</feature>
<feature type="binding site" evidence="1">
    <location>
        <position position="180"/>
    </location>
    <ligand>
        <name>Zn(2+)</name>
        <dbReference type="ChEBI" id="CHEBI:29105"/>
    </ligand>
</feature>
<feature type="binding site" evidence="1">
    <location>
        <position position="243"/>
    </location>
    <ligand>
        <name>Zn(2+)</name>
        <dbReference type="ChEBI" id="CHEBI:29105"/>
    </ligand>
</feature>
<feature type="binding site" evidence="1">
    <location>
        <position position="260"/>
    </location>
    <ligand>
        <name>Zn(2+)</name>
        <dbReference type="ChEBI" id="CHEBI:29105"/>
    </ligand>
</feature>
<accession>P59487</accession>
<reference key="1">
    <citation type="journal article" date="2003" name="Proc. Natl. Acad. Sci. U.S.A.">
        <title>Reductive genome evolution in Buchnera aphidicola.</title>
        <authorList>
            <person name="van Ham R.C.H.J."/>
            <person name="Kamerbeek J."/>
            <person name="Palacios C."/>
            <person name="Rausell C."/>
            <person name="Abascal F."/>
            <person name="Bastolla U."/>
            <person name="Fernandez J.M."/>
            <person name="Jimenez L."/>
            <person name="Postigo M."/>
            <person name="Silva F.J."/>
            <person name="Tamames J."/>
            <person name="Viguera E."/>
            <person name="Latorre A."/>
            <person name="Valencia A."/>
            <person name="Moran F."/>
            <person name="Moya A."/>
        </authorList>
    </citation>
    <scope>NUCLEOTIDE SEQUENCE [LARGE SCALE GENOMIC DNA]</scope>
    <source>
        <strain>Bp</strain>
    </source>
</reference>
<proteinExistence type="inferred from homology"/>
<organism>
    <name type="scientific">Buchnera aphidicola subsp. Baizongia pistaciae (strain Bp)</name>
    <dbReference type="NCBI Taxonomy" id="224915"/>
    <lineage>
        <taxon>Bacteria</taxon>
        <taxon>Pseudomonadati</taxon>
        <taxon>Pseudomonadota</taxon>
        <taxon>Gammaproteobacteria</taxon>
        <taxon>Enterobacterales</taxon>
        <taxon>Erwiniaceae</taxon>
        <taxon>Buchnera</taxon>
    </lineage>
</organism>
<sequence>MVNLGKDTYPVYIGSNLLEISNIFFPIESNTQVAIITNDVVFKIWNKKITYYLHKLGAQVKNVIISDGEIYKNIDTVEIILSTLLKYSYCRDAVLIALGGGVIGDITGFVASIYQRGIKFVQIPTTLLAQVDASIGGKTSVNHVLGKNMIGSFWQPSSVIINFDFLNTLPRRQLISGIAEIVKYAVSFDVNFFNWLEENLERVLKLDYSALSYCINRCCEIKISIVEKDEKEIHDRMLLNLGHTYGHAIETFLGYGTWLHGEAVSVGIVMASKTSELLGFMKDNDITRIISLLQRVGLPISGPKNMSFESYISNFKRDKKVISGKLRMVLPVFIGNVKIFSNVHENILMSVIKNC</sequence>
<keyword id="KW-0028">Amino-acid biosynthesis</keyword>
<keyword id="KW-0057">Aromatic amino acid biosynthesis</keyword>
<keyword id="KW-0170">Cobalt</keyword>
<keyword id="KW-0963">Cytoplasm</keyword>
<keyword id="KW-0456">Lyase</keyword>
<keyword id="KW-0479">Metal-binding</keyword>
<keyword id="KW-0520">NAD</keyword>
<keyword id="KW-0547">Nucleotide-binding</keyword>
<keyword id="KW-1185">Reference proteome</keyword>
<keyword id="KW-0862">Zinc</keyword>
<gene>
    <name evidence="1" type="primary">aroB</name>
    <name type="ordered locus">bbp_480</name>
</gene>
<evidence type="ECO:0000255" key="1">
    <source>
        <dbReference type="HAMAP-Rule" id="MF_00110"/>
    </source>
</evidence>
<name>AROB_BUCBP</name>
<comment type="function">
    <text evidence="1">Catalyzes the conversion of 3-deoxy-D-arabino-heptulosonate 7-phosphate (DAHP) to dehydroquinate (DHQ).</text>
</comment>
<comment type="catalytic activity">
    <reaction evidence="1">
        <text>7-phospho-2-dehydro-3-deoxy-D-arabino-heptonate = 3-dehydroquinate + phosphate</text>
        <dbReference type="Rhea" id="RHEA:21968"/>
        <dbReference type="ChEBI" id="CHEBI:32364"/>
        <dbReference type="ChEBI" id="CHEBI:43474"/>
        <dbReference type="ChEBI" id="CHEBI:58394"/>
        <dbReference type="EC" id="4.2.3.4"/>
    </reaction>
</comment>
<comment type="cofactor">
    <cofactor evidence="1">
        <name>NAD(+)</name>
        <dbReference type="ChEBI" id="CHEBI:57540"/>
    </cofactor>
</comment>
<comment type="cofactor">
    <cofactor evidence="1">
        <name>Co(2+)</name>
        <dbReference type="ChEBI" id="CHEBI:48828"/>
    </cofactor>
    <cofactor evidence="1">
        <name>Zn(2+)</name>
        <dbReference type="ChEBI" id="CHEBI:29105"/>
    </cofactor>
    <text evidence="1">Binds 1 divalent metal cation per subunit. Can use either Co(2+) or Zn(2+).</text>
</comment>
<comment type="pathway">
    <text evidence="1">Metabolic intermediate biosynthesis; chorismate biosynthesis; chorismate from D-erythrose 4-phosphate and phosphoenolpyruvate: step 2/7.</text>
</comment>
<comment type="subcellular location">
    <subcellularLocation>
        <location evidence="1">Cytoplasm</location>
    </subcellularLocation>
</comment>
<comment type="similarity">
    <text evidence="1">Belongs to the sugar phosphate cyclases superfamily. Dehydroquinate synthase family.</text>
</comment>